<evidence type="ECO:0000255" key="1">
    <source>
        <dbReference type="HAMAP-Rule" id="MF_00440"/>
    </source>
</evidence>
<name>NRDR_ALISL</name>
<accession>B6EI95</accession>
<reference key="1">
    <citation type="journal article" date="2008" name="BMC Genomics">
        <title>The genome sequence of the fish pathogen Aliivibrio salmonicida strain LFI1238 shows extensive evidence of gene decay.</title>
        <authorList>
            <person name="Hjerde E."/>
            <person name="Lorentzen M.S."/>
            <person name="Holden M.T."/>
            <person name="Seeger K."/>
            <person name="Paulsen S."/>
            <person name="Bason N."/>
            <person name="Churcher C."/>
            <person name="Harris D."/>
            <person name="Norbertczak H."/>
            <person name="Quail M.A."/>
            <person name="Sanders S."/>
            <person name="Thurston S."/>
            <person name="Parkhill J."/>
            <person name="Willassen N.P."/>
            <person name="Thomson N.R."/>
        </authorList>
    </citation>
    <scope>NUCLEOTIDE SEQUENCE [LARGE SCALE GENOMIC DNA]</scope>
    <source>
        <strain>LFI1238</strain>
    </source>
</reference>
<protein>
    <recommendedName>
        <fullName evidence="1">Transcriptional repressor NrdR</fullName>
    </recommendedName>
</protein>
<comment type="function">
    <text evidence="1">Negatively regulates transcription of bacterial ribonucleotide reductase nrd genes and operons by binding to NrdR-boxes.</text>
</comment>
<comment type="cofactor">
    <cofactor evidence="1">
        <name>Zn(2+)</name>
        <dbReference type="ChEBI" id="CHEBI:29105"/>
    </cofactor>
    <text evidence="1">Binds 1 zinc ion.</text>
</comment>
<comment type="similarity">
    <text evidence="1">Belongs to the NrdR family.</text>
</comment>
<sequence length="149" mass="17024">MHCPFCSATDTKVIDSRLVSDGHQVRRRRQCLACSERFTTFESAELVMPKVIKSNGNREPFDEDKLSGGLYRSLEKRPVSADLVELALNTIKSKLRATGEREVPSEMIGNFVMDQLKELDKVAYIRFASVYRSFEDIKEFGEEIAKLEK</sequence>
<keyword id="KW-0067">ATP-binding</keyword>
<keyword id="KW-0238">DNA-binding</keyword>
<keyword id="KW-0479">Metal-binding</keyword>
<keyword id="KW-0547">Nucleotide-binding</keyword>
<keyword id="KW-0678">Repressor</keyword>
<keyword id="KW-0804">Transcription</keyword>
<keyword id="KW-0805">Transcription regulation</keyword>
<keyword id="KW-0862">Zinc</keyword>
<keyword id="KW-0863">Zinc-finger</keyword>
<gene>
    <name evidence="1" type="primary">nrdR</name>
    <name type="ordered locus">VSAL_I0921</name>
</gene>
<dbReference type="EMBL" id="FM178379">
    <property type="protein sequence ID" value="CAQ78606.1"/>
    <property type="molecule type" value="Genomic_DNA"/>
</dbReference>
<dbReference type="RefSeq" id="WP_012549693.1">
    <property type="nucleotide sequence ID" value="NC_011312.1"/>
</dbReference>
<dbReference type="SMR" id="B6EI95"/>
<dbReference type="KEGG" id="vsa:VSAL_I0921"/>
<dbReference type="eggNOG" id="COG1327">
    <property type="taxonomic scope" value="Bacteria"/>
</dbReference>
<dbReference type="HOGENOM" id="CLU_108412_0_0_6"/>
<dbReference type="Proteomes" id="UP000001730">
    <property type="component" value="Chromosome 1"/>
</dbReference>
<dbReference type="GO" id="GO:0005524">
    <property type="term" value="F:ATP binding"/>
    <property type="evidence" value="ECO:0007669"/>
    <property type="project" value="UniProtKB-KW"/>
</dbReference>
<dbReference type="GO" id="GO:0003677">
    <property type="term" value="F:DNA binding"/>
    <property type="evidence" value="ECO:0007669"/>
    <property type="project" value="UniProtKB-KW"/>
</dbReference>
<dbReference type="GO" id="GO:0008270">
    <property type="term" value="F:zinc ion binding"/>
    <property type="evidence" value="ECO:0007669"/>
    <property type="project" value="UniProtKB-UniRule"/>
</dbReference>
<dbReference type="GO" id="GO:0045892">
    <property type="term" value="P:negative regulation of DNA-templated transcription"/>
    <property type="evidence" value="ECO:0007669"/>
    <property type="project" value="UniProtKB-UniRule"/>
</dbReference>
<dbReference type="HAMAP" id="MF_00440">
    <property type="entry name" value="NrdR"/>
    <property type="match status" value="1"/>
</dbReference>
<dbReference type="InterPro" id="IPR005144">
    <property type="entry name" value="ATP-cone_dom"/>
</dbReference>
<dbReference type="InterPro" id="IPR055173">
    <property type="entry name" value="NrdR-like_N"/>
</dbReference>
<dbReference type="InterPro" id="IPR003796">
    <property type="entry name" value="RNR_NrdR-like"/>
</dbReference>
<dbReference type="NCBIfam" id="TIGR00244">
    <property type="entry name" value="transcriptional regulator NrdR"/>
    <property type="match status" value="1"/>
</dbReference>
<dbReference type="PANTHER" id="PTHR30455">
    <property type="entry name" value="TRANSCRIPTIONAL REPRESSOR NRDR"/>
    <property type="match status" value="1"/>
</dbReference>
<dbReference type="PANTHER" id="PTHR30455:SF2">
    <property type="entry name" value="TRANSCRIPTIONAL REPRESSOR NRDR"/>
    <property type="match status" value="1"/>
</dbReference>
<dbReference type="Pfam" id="PF03477">
    <property type="entry name" value="ATP-cone"/>
    <property type="match status" value="1"/>
</dbReference>
<dbReference type="Pfam" id="PF22811">
    <property type="entry name" value="Zn_ribbon_NrdR"/>
    <property type="match status" value="1"/>
</dbReference>
<dbReference type="PROSITE" id="PS51161">
    <property type="entry name" value="ATP_CONE"/>
    <property type="match status" value="1"/>
</dbReference>
<proteinExistence type="inferred from homology"/>
<feature type="chain" id="PRO_1000124462" description="Transcriptional repressor NrdR">
    <location>
        <begin position="1"/>
        <end position="149"/>
    </location>
</feature>
<feature type="domain" description="ATP-cone" evidence="1">
    <location>
        <begin position="49"/>
        <end position="139"/>
    </location>
</feature>
<feature type="zinc finger region" evidence="1">
    <location>
        <begin position="3"/>
        <end position="34"/>
    </location>
</feature>
<organism>
    <name type="scientific">Aliivibrio salmonicida (strain LFI1238)</name>
    <name type="common">Vibrio salmonicida (strain LFI1238)</name>
    <dbReference type="NCBI Taxonomy" id="316275"/>
    <lineage>
        <taxon>Bacteria</taxon>
        <taxon>Pseudomonadati</taxon>
        <taxon>Pseudomonadota</taxon>
        <taxon>Gammaproteobacteria</taxon>
        <taxon>Vibrionales</taxon>
        <taxon>Vibrionaceae</taxon>
        <taxon>Aliivibrio</taxon>
    </lineage>
</organism>